<protein>
    <recommendedName>
        <fullName evidence="1">Tryptophan synthase beta chain</fullName>
        <ecNumber evidence="1">4.2.1.20</ecNumber>
    </recommendedName>
</protein>
<accession>Q81TL8</accession>
<accession>Q6I1U8</accession>
<accession>Q6KVP0</accession>
<comment type="function">
    <text evidence="1">The beta subunit is responsible for the synthesis of L-tryptophan from indole and L-serine.</text>
</comment>
<comment type="catalytic activity">
    <reaction evidence="1">
        <text>(1S,2R)-1-C-(indol-3-yl)glycerol 3-phosphate + L-serine = D-glyceraldehyde 3-phosphate + L-tryptophan + H2O</text>
        <dbReference type="Rhea" id="RHEA:10532"/>
        <dbReference type="ChEBI" id="CHEBI:15377"/>
        <dbReference type="ChEBI" id="CHEBI:33384"/>
        <dbReference type="ChEBI" id="CHEBI:57912"/>
        <dbReference type="ChEBI" id="CHEBI:58866"/>
        <dbReference type="ChEBI" id="CHEBI:59776"/>
        <dbReference type="EC" id="4.2.1.20"/>
    </reaction>
</comment>
<comment type="cofactor">
    <cofactor evidence="1">
        <name>pyridoxal 5'-phosphate</name>
        <dbReference type="ChEBI" id="CHEBI:597326"/>
    </cofactor>
</comment>
<comment type="pathway">
    <text evidence="1">Amino-acid biosynthesis; L-tryptophan biosynthesis; L-tryptophan from chorismate: step 5/5.</text>
</comment>
<comment type="subunit">
    <text evidence="1">Tetramer of two alpha and two beta chains.</text>
</comment>
<comment type="similarity">
    <text evidence="1">Belongs to the TrpB family.</text>
</comment>
<sequence>MNYAYPDEKGHYGIYGGRYVPETLMQSVLELEEAYKEAMEDEAFQKELNHYLKTYVGRETPLYFAENMTEYCGGAKIYLKREDLNHTGAHKINNTIGQALLAVRMGKKKVVAETGAGQHGVATATVCALLGLECVIFMGEEDVRRQKLNVFRMELLGAKVESVAAGSGTLKDAVNEALRYWVSHVHDTHYIMGSVLGPHPFPQIVRDFQSVIGNETKKQYEALEGKLPEAVVACIGGGSNAMGMFYPFVHDEEVALYGVEAAGKGVHTEKHAATLTKGSVGVLHGSMMYLLQNEEGQIQEAHSISAGLDYPGVGPEHSLLKDIGRVSYHSITDDEALEAFQLLTKKEGIIPALESSHAVAYALKLAPQMKEDEGLVICLSGRGDKDVESIKRYMEEV</sequence>
<reference key="1">
    <citation type="journal article" date="2003" name="Nature">
        <title>The genome sequence of Bacillus anthracis Ames and comparison to closely related bacteria.</title>
        <authorList>
            <person name="Read T.D."/>
            <person name="Peterson S.N."/>
            <person name="Tourasse N.J."/>
            <person name="Baillie L.W."/>
            <person name="Paulsen I.T."/>
            <person name="Nelson K.E."/>
            <person name="Tettelin H."/>
            <person name="Fouts D.E."/>
            <person name="Eisen J.A."/>
            <person name="Gill S.R."/>
            <person name="Holtzapple E.K."/>
            <person name="Okstad O.A."/>
            <person name="Helgason E."/>
            <person name="Rilstone J."/>
            <person name="Wu M."/>
            <person name="Kolonay J.F."/>
            <person name="Beanan M.J."/>
            <person name="Dodson R.J."/>
            <person name="Brinkac L.M."/>
            <person name="Gwinn M.L."/>
            <person name="DeBoy R.T."/>
            <person name="Madpu R."/>
            <person name="Daugherty S.C."/>
            <person name="Durkin A.S."/>
            <person name="Haft D.H."/>
            <person name="Nelson W.C."/>
            <person name="Peterson J.D."/>
            <person name="Pop M."/>
            <person name="Khouri H.M."/>
            <person name="Radune D."/>
            <person name="Benton J.L."/>
            <person name="Mahamoud Y."/>
            <person name="Jiang L."/>
            <person name="Hance I.R."/>
            <person name="Weidman J.F."/>
            <person name="Berry K.J."/>
            <person name="Plaut R.D."/>
            <person name="Wolf A.M."/>
            <person name="Watkins K.L."/>
            <person name="Nierman W.C."/>
            <person name="Hazen A."/>
            <person name="Cline R.T."/>
            <person name="Redmond C."/>
            <person name="Thwaite J.E."/>
            <person name="White O."/>
            <person name="Salzberg S.L."/>
            <person name="Thomason B."/>
            <person name="Friedlander A.M."/>
            <person name="Koehler T.M."/>
            <person name="Hanna P.C."/>
            <person name="Kolstoe A.-B."/>
            <person name="Fraser C.M."/>
        </authorList>
    </citation>
    <scope>NUCLEOTIDE SEQUENCE [LARGE SCALE GENOMIC DNA]</scope>
    <source>
        <strain>Ames / isolate Porton</strain>
    </source>
</reference>
<reference key="2">
    <citation type="journal article" date="2009" name="J. Bacteriol.">
        <title>The complete genome sequence of Bacillus anthracis Ames 'Ancestor'.</title>
        <authorList>
            <person name="Ravel J."/>
            <person name="Jiang L."/>
            <person name="Stanley S.T."/>
            <person name="Wilson M.R."/>
            <person name="Decker R.S."/>
            <person name="Read T.D."/>
            <person name="Worsham P."/>
            <person name="Keim P.S."/>
            <person name="Salzberg S.L."/>
            <person name="Fraser-Liggett C.M."/>
            <person name="Rasko D.A."/>
        </authorList>
    </citation>
    <scope>NUCLEOTIDE SEQUENCE [LARGE SCALE GENOMIC DNA]</scope>
    <source>
        <strain>Ames ancestor</strain>
    </source>
</reference>
<reference key="3">
    <citation type="submission" date="2004-01" db="EMBL/GenBank/DDBJ databases">
        <title>Complete genome sequence of Bacillus anthracis Sterne.</title>
        <authorList>
            <person name="Brettin T.S."/>
            <person name="Bruce D."/>
            <person name="Challacombe J.F."/>
            <person name="Gilna P."/>
            <person name="Han C."/>
            <person name="Hill K."/>
            <person name="Hitchcock P."/>
            <person name="Jackson P."/>
            <person name="Keim P."/>
            <person name="Longmire J."/>
            <person name="Lucas S."/>
            <person name="Okinaka R."/>
            <person name="Richardson P."/>
            <person name="Rubin E."/>
            <person name="Tice H."/>
        </authorList>
    </citation>
    <scope>NUCLEOTIDE SEQUENCE [LARGE SCALE GENOMIC DNA]</scope>
    <source>
        <strain>Sterne</strain>
    </source>
</reference>
<proteinExistence type="evidence at protein level"/>
<gene>
    <name evidence="1" type="primary">trpB</name>
    <name type="ordered locus">BA_1253</name>
    <name type="ordered locus">GBAA_1253</name>
    <name type="ordered locus">BAS1161</name>
</gene>
<name>TRPB_BACAN</name>
<evidence type="ECO:0000255" key="1">
    <source>
        <dbReference type="HAMAP-Rule" id="MF_00133"/>
    </source>
</evidence>
<evidence type="ECO:0007829" key="2">
    <source>
        <dbReference type="PDB" id="4NEG"/>
    </source>
</evidence>
<keyword id="KW-0002">3D-structure</keyword>
<keyword id="KW-0028">Amino-acid biosynthesis</keyword>
<keyword id="KW-0057">Aromatic amino acid biosynthesis</keyword>
<keyword id="KW-0456">Lyase</keyword>
<keyword id="KW-0663">Pyridoxal phosphate</keyword>
<keyword id="KW-1185">Reference proteome</keyword>
<keyword id="KW-0822">Tryptophan biosynthesis</keyword>
<dbReference type="EC" id="4.2.1.20" evidence="1"/>
<dbReference type="EMBL" id="AE016879">
    <property type="protein sequence ID" value="AAP25211.1"/>
    <property type="molecule type" value="Genomic_DNA"/>
</dbReference>
<dbReference type="EMBL" id="AE017334">
    <property type="protein sequence ID" value="AAT30343.1"/>
    <property type="molecule type" value="Genomic_DNA"/>
</dbReference>
<dbReference type="EMBL" id="AE017225">
    <property type="protein sequence ID" value="AAT53483.1"/>
    <property type="molecule type" value="Genomic_DNA"/>
</dbReference>
<dbReference type="RefSeq" id="NP_843725.1">
    <property type="nucleotide sequence ID" value="NC_003997.3"/>
</dbReference>
<dbReference type="RefSeq" id="WP_001105001.1">
    <property type="nucleotide sequence ID" value="NZ_WXXJ01000020.1"/>
</dbReference>
<dbReference type="RefSeq" id="YP_027432.1">
    <property type="nucleotide sequence ID" value="NC_005945.1"/>
</dbReference>
<dbReference type="PDB" id="4NEG">
    <property type="method" value="X-ray"/>
    <property type="resolution" value="2.20 A"/>
    <property type="chains" value="A/B=1-397"/>
</dbReference>
<dbReference type="PDBsum" id="4NEG"/>
<dbReference type="SMR" id="Q81TL8"/>
<dbReference type="IntAct" id="Q81TL8">
    <property type="interactions" value="4"/>
</dbReference>
<dbReference type="STRING" id="261594.GBAA_1253"/>
<dbReference type="DNASU" id="1086833"/>
<dbReference type="GeneID" id="45021253"/>
<dbReference type="KEGG" id="ban:BA_1253"/>
<dbReference type="KEGG" id="banh:HYU01_06425"/>
<dbReference type="KEGG" id="bar:GBAA_1253"/>
<dbReference type="KEGG" id="bat:BAS1161"/>
<dbReference type="PATRIC" id="fig|198094.11.peg.1229"/>
<dbReference type="eggNOG" id="COG0133">
    <property type="taxonomic scope" value="Bacteria"/>
</dbReference>
<dbReference type="HOGENOM" id="CLU_016734_3_1_9"/>
<dbReference type="OMA" id="PLTLCQN"/>
<dbReference type="OrthoDB" id="9766131at2"/>
<dbReference type="UniPathway" id="UPA00035">
    <property type="reaction ID" value="UER00044"/>
</dbReference>
<dbReference type="EvolutionaryTrace" id="Q81TL8"/>
<dbReference type="Proteomes" id="UP000000427">
    <property type="component" value="Chromosome"/>
</dbReference>
<dbReference type="Proteomes" id="UP000000594">
    <property type="component" value="Chromosome"/>
</dbReference>
<dbReference type="GO" id="GO:0005737">
    <property type="term" value="C:cytoplasm"/>
    <property type="evidence" value="ECO:0007669"/>
    <property type="project" value="TreeGrafter"/>
</dbReference>
<dbReference type="GO" id="GO:0004834">
    <property type="term" value="F:tryptophan synthase activity"/>
    <property type="evidence" value="ECO:0007669"/>
    <property type="project" value="UniProtKB-UniRule"/>
</dbReference>
<dbReference type="CDD" id="cd06446">
    <property type="entry name" value="Trp-synth_B"/>
    <property type="match status" value="1"/>
</dbReference>
<dbReference type="FunFam" id="3.40.50.1100:FF:000001">
    <property type="entry name" value="Tryptophan synthase beta chain"/>
    <property type="match status" value="1"/>
</dbReference>
<dbReference type="FunFam" id="3.40.50.1100:FF:000004">
    <property type="entry name" value="Tryptophan synthase beta chain"/>
    <property type="match status" value="1"/>
</dbReference>
<dbReference type="Gene3D" id="3.40.50.1100">
    <property type="match status" value="2"/>
</dbReference>
<dbReference type="HAMAP" id="MF_00133">
    <property type="entry name" value="Trp_synth_beta"/>
    <property type="match status" value="1"/>
</dbReference>
<dbReference type="InterPro" id="IPR006653">
    <property type="entry name" value="Trp_synth_b_CS"/>
</dbReference>
<dbReference type="InterPro" id="IPR006654">
    <property type="entry name" value="Trp_synth_beta"/>
</dbReference>
<dbReference type="InterPro" id="IPR023026">
    <property type="entry name" value="Trp_synth_beta/beta-like"/>
</dbReference>
<dbReference type="InterPro" id="IPR001926">
    <property type="entry name" value="TrpB-like_PALP"/>
</dbReference>
<dbReference type="InterPro" id="IPR036052">
    <property type="entry name" value="TrpB-like_PALP_sf"/>
</dbReference>
<dbReference type="NCBIfam" id="TIGR00263">
    <property type="entry name" value="trpB"/>
    <property type="match status" value="1"/>
</dbReference>
<dbReference type="PANTHER" id="PTHR48077:SF3">
    <property type="entry name" value="TRYPTOPHAN SYNTHASE"/>
    <property type="match status" value="1"/>
</dbReference>
<dbReference type="PANTHER" id="PTHR48077">
    <property type="entry name" value="TRYPTOPHAN SYNTHASE-RELATED"/>
    <property type="match status" value="1"/>
</dbReference>
<dbReference type="Pfam" id="PF00291">
    <property type="entry name" value="PALP"/>
    <property type="match status" value="1"/>
</dbReference>
<dbReference type="PIRSF" id="PIRSF001413">
    <property type="entry name" value="Trp_syn_beta"/>
    <property type="match status" value="1"/>
</dbReference>
<dbReference type="SUPFAM" id="SSF53686">
    <property type="entry name" value="Tryptophan synthase beta subunit-like PLP-dependent enzymes"/>
    <property type="match status" value="1"/>
</dbReference>
<dbReference type="PROSITE" id="PS00168">
    <property type="entry name" value="TRP_SYNTHASE_BETA"/>
    <property type="match status" value="1"/>
</dbReference>
<feature type="chain" id="PRO_0000098914" description="Tryptophan synthase beta chain">
    <location>
        <begin position="1"/>
        <end position="397"/>
    </location>
</feature>
<feature type="modified residue" description="N6-(pyridoxal phosphate)lysine" evidence="1">
    <location>
        <position position="91"/>
    </location>
</feature>
<feature type="helix" evidence="2">
    <location>
        <begin position="24"/>
        <end position="39"/>
    </location>
</feature>
<feature type="helix" evidence="2">
    <location>
        <begin position="42"/>
        <end position="54"/>
    </location>
</feature>
<feature type="strand" evidence="2">
    <location>
        <begin position="62"/>
        <end position="64"/>
    </location>
</feature>
<feature type="helix" evidence="2">
    <location>
        <begin position="66"/>
        <end position="72"/>
    </location>
</feature>
<feature type="strand" evidence="2">
    <location>
        <begin position="74"/>
        <end position="81"/>
    </location>
</feature>
<feature type="helix" evidence="2">
    <location>
        <begin position="82"/>
        <end position="84"/>
    </location>
</feature>
<feature type="strand" evidence="2">
    <location>
        <begin position="88"/>
        <end position="90"/>
    </location>
</feature>
<feature type="helix" evidence="2">
    <location>
        <begin position="92"/>
        <end position="105"/>
    </location>
</feature>
<feature type="strand" evidence="2">
    <location>
        <begin position="109"/>
        <end position="117"/>
    </location>
</feature>
<feature type="helix" evidence="2">
    <location>
        <begin position="118"/>
        <end position="130"/>
    </location>
</feature>
<feature type="strand" evidence="2">
    <location>
        <begin position="133"/>
        <end position="139"/>
    </location>
</feature>
<feature type="helix" evidence="2">
    <location>
        <begin position="140"/>
        <end position="144"/>
    </location>
</feature>
<feature type="helix" evidence="2">
    <location>
        <begin position="147"/>
        <end position="155"/>
    </location>
</feature>
<feature type="strand" evidence="2">
    <location>
        <begin position="159"/>
        <end position="163"/>
    </location>
</feature>
<feature type="helix" evidence="2">
    <location>
        <begin position="170"/>
        <end position="184"/>
    </location>
</feature>
<feature type="turn" evidence="2">
    <location>
        <begin position="185"/>
        <end position="187"/>
    </location>
</feature>
<feature type="strand" evidence="2">
    <location>
        <begin position="188"/>
        <end position="190"/>
    </location>
</feature>
<feature type="strand" evidence="2">
    <location>
        <begin position="195"/>
        <end position="198"/>
    </location>
</feature>
<feature type="helix" evidence="2">
    <location>
        <begin position="201"/>
        <end position="224"/>
    </location>
</feature>
<feature type="strand" evidence="2">
    <location>
        <begin position="229"/>
        <end position="234"/>
    </location>
</feature>
<feature type="helix" evidence="2">
    <location>
        <begin position="242"/>
        <end position="245"/>
    </location>
</feature>
<feature type="helix" evidence="2">
    <location>
        <begin position="246"/>
        <end position="248"/>
    </location>
</feature>
<feature type="strand" evidence="2">
    <location>
        <begin position="254"/>
        <end position="261"/>
    </location>
</feature>
<feature type="helix" evidence="2">
    <location>
        <begin position="318"/>
        <end position="322"/>
    </location>
</feature>
<feature type="strand" evidence="2">
    <location>
        <begin position="325"/>
        <end position="331"/>
    </location>
</feature>
<feature type="helix" evidence="2">
    <location>
        <begin position="333"/>
        <end position="347"/>
    </location>
</feature>
<feature type="helix" evidence="2">
    <location>
        <begin position="353"/>
        <end position="365"/>
    </location>
</feature>
<feature type="helix" evidence="2">
    <location>
        <begin position="366"/>
        <end position="368"/>
    </location>
</feature>
<feature type="strand" evidence="2">
    <location>
        <begin position="374"/>
        <end position="379"/>
    </location>
</feature>
<feature type="helix" evidence="2">
    <location>
        <begin position="383"/>
        <end position="385"/>
    </location>
</feature>
<feature type="helix" evidence="2">
    <location>
        <begin position="387"/>
        <end position="393"/>
    </location>
</feature>
<organism>
    <name type="scientific">Bacillus anthracis</name>
    <dbReference type="NCBI Taxonomy" id="1392"/>
    <lineage>
        <taxon>Bacteria</taxon>
        <taxon>Bacillati</taxon>
        <taxon>Bacillota</taxon>
        <taxon>Bacilli</taxon>
        <taxon>Bacillales</taxon>
        <taxon>Bacillaceae</taxon>
        <taxon>Bacillus</taxon>
        <taxon>Bacillus cereus group</taxon>
    </lineage>
</organism>